<protein>
    <recommendedName>
        <fullName evidence="1">Large ribosomal subunit protein bL28</fullName>
    </recommendedName>
    <alternativeName>
        <fullName evidence="2">50S ribosomal protein L28</fullName>
    </alternativeName>
</protein>
<comment type="similarity">
    <text evidence="1">Belongs to the bacterial ribosomal protein bL28 family.</text>
</comment>
<comment type="sequence caution" evidence="2">
    <conflict type="erroneous initiation">
        <sequence resource="EMBL-CDS" id="AAV86751"/>
    </conflict>
</comment>
<gene>
    <name evidence="1" type="primary">rpmB</name>
    <name type="ordered locus">AM826</name>
</gene>
<proteinExistence type="inferred from homology"/>
<keyword id="KW-0687">Ribonucleoprotein</keyword>
<keyword id="KW-0689">Ribosomal protein</keyword>
<sequence>MSRVCDVTGLAKSFGNKVSHSNRKTKRSYLVNLHNVTLVSEVLGRKFKMKVAARTLRTINYKGGFDLYLLNTASRKLSDEAQKIKRKIRAAIASGKSLQCGVL</sequence>
<name>RL28_ANAMM</name>
<organism>
    <name type="scientific">Anaplasma marginale (strain St. Maries)</name>
    <dbReference type="NCBI Taxonomy" id="234826"/>
    <lineage>
        <taxon>Bacteria</taxon>
        <taxon>Pseudomonadati</taxon>
        <taxon>Pseudomonadota</taxon>
        <taxon>Alphaproteobacteria</taxon>
        <taxon>Rickettsiales</taxon>
        <taxon>Anaplasmataceae</taxon>
        <taxon>Anaplasma</taxon>
    </lineage>
</organism>
<accession>Q5PAC9</accession>
<dbReference type="EMBL" id="CP000030">
    <property type="protein sequence ID" value="AAV86751.1"/>
    <property type="status" value="ALT_INIT"/>
    <property type="molecule type" value="Genomic_DNA"/>
</dbReference>
<dbReference type="RefSeq" id="WP_029209882.1">
    <property type="nucleotide sequence ID" value="NZ_AFMU01000051.1"/>
</dbReference>
<dbReference type="SMR" id="Q5PAC9"/>
<dbReference type="GeneID" id="23673071"/>
<dbReference type="KEGG" id="ama:AM826"/>
<dbReference type="HOGENOM" id="CLU_064548_4_2_5"/>
<dbReference type="GO" id="GO:1990904">
    <property type="term" value="C:ribonucleoprotein complex"/>
    <property type="evidence" value="ECO:0007669"/>
    <property type="project" value="UniProtKB-KW"/>
</dbReference>
<dbReference type="GO" id="GO:0005840">
    <property type="term" value="C:ribosome"/>
    <property type="evidence" value="ECO:0007669"/>
    <property type="project" value="UniProtKB-KW"/>
</dbReference>
<dbReference type="GO" id="GO:0003735">
    <property type="term" value="F:structural constituent of ribosome"/>
    <property type="evidence" value="ECO:0007669"/>
    <property type="project" value="InterPro"/>
</dbReference>
<dbReference type="GO" id="GO:0006412">
    <property type="term" value="P:translation"/>
    <property type="evidence" value="ECO:0007669"/>
    <property type="project" value="UniProtKB-UniRule"/>
</dbReference>
<dbReference type="Gene3D" id="2.30.170.40">
    <property type="entry name" value="Ribosomal protein L28/L24"/>
    <property type="match status" value="1"/>
</dbReference>
<dbReference type="HAMAP" id="MF_00373">
    <property type="entry name" value="Ribosomal_bL28"/>
    <property type="match status" value="1"/>
</dbReference>
<dbReference type="InterPro" id="IPR026569">
    <property type="entry name" value="Ribosomal_bL28"/>
</dbReference>
<dbReference type="InterPro" id="IPR034704">
    <property type="entry name" value="Ribosomal_bL28/bL31-like_sf"/>
</dbReference>
<dbReference type="InterPro" id="IPR001383">
    <property type="entry name" value="Ribosomal_bL28_bact-type"/>
</dbReference>
<dbReference type="InterPro" id="IPR037147">
    <property type="entry name" value="Ribosomal_bL28_sf"/>
</dbReference>
<dbReference type="NCBIfam" id="TIGR00009">
    <property type="entry name" value="L28"/>
    <property type="match status" value="1"/>
</dbReference>
<dbReference type="PANTHER" id="PTHR13528">
    <property type="entry name" value="39S RIBOSOMAL PROTEIN L28, MITOCHONDRIAL"/>
    <property type="match status" value="1"/>
</dbReference>
<dbReference type="PANTHER" id="PTHR13528:SF2">
    <property type="entry name" value="LARGE RIBOSOMAL SUBUNIT PROTEIN BL28M"/>
    <property type="match status" value="1"/>
</dbReference>
<dbReference type="Pfam" id="PF00830">
    <property type="entry name" value="Ribosomal_L28"/>
    <property type="match status" value="1"/>
</dbReference>
<dbReference type="SUPFAM" id="SSF143800">
    <property type="entry name" value="L28p-like"/>
    <property type="match status" value="1"/>
</dbReference>
<evidence type="ECO:0000255" key="1">
    <source>
        <dbReference type="HAMAP-Rule" id="MF_00373"/>
    </source>
</evidence>
<evidence type="ECO:0000305" key="2"/>
<feature type="chain" id="PRO_0000178417" description="Large ribosomal subunit protein bL28">
    <location>
        <begin position="1"/>
        <end position="103"/>
    </location>
</feature>
<reference key="1">
    <citation type="journal article" date="2005" name="Proc. Natl. Acad. Sci. U.S.A.">
        <title>Complete genome sequencing of Anaplasma marginale reveals that the surface is skewed to two superfamilies of outer membrane proteins.</title>
        <authorList>
            <person name="Brayton K.A."/>
            <person name="Kappmeyer L.S."/>
            <person name="Herndon D.R."/>
            <person name="Dark M.J."/>
            <person name="Tibbals D.L."/>
            <person name="Palmer G.H."/>
            <person name="McGuire T.C."/>
            <person name="Knowles D.P. Jr."/>
        </authorList>
    </citation>
    <scope>NUCLEOTIDE SEQUENCE [LARGE SCALE GENOMIC DNA]</scope>
    <source>
        <strain>St. Maries</strain>
    </source>
</reference>